<protein>
    <recommendedName>
        <fullName>Serine protease hepsin</fullName>
        <ecNumber>3.4.21.106</ecNumber>
    </recommendedName>
    <alternativeName>
        <fullName>Transmembrane protease serine 1</fullName>
    </alternativeName>
    <component>
        <recommendedName>
            <fullName>Serine protease hepsin non-catalytic chain</fullName>
        </recommendedName>
    </component>
    <component>
        <recommendedName>
            <fullName>Serine protease hepsin catalytic chain</fullName>
        </recommendedName>
    </component>
</protein>
<comment type="function">
    <text evidence="1">Plays an essential role in cell growth and maintenance of cell morphology. May mediate the activating cleavage of HGF and MST1/HGFL. Plays a role in the proteolytic processing of ACE2 (By similarity).</text>
</comment>
<comment type="catalytic activity">
    <reaction>
        <text>Cleavage after basic amino-acid residues, with Arg strongly preferred to Lys.</text>
        <dbReference type="EC" id="3.4.21.106"/>
    </reaction>
</comment>
<comment type="subcellular location">
    <subcellularLocation>
        <location>Membrane</location>
        <topology>Single-pass type II membrane protein</topology>
    </subcellularLocation>
</comment>
<comment type="similarity">
    <text evidence="3">Belongs to the peptidase S1 family.</text>
</comment>
<evidence type="ECO:0000250" key="1"/>
<evidence type="ECO:0000255" key="2"/>
<evidence type="ECO:0000255" key="3">
    <source>
        <dbReference type="PROSITE-ProRule" id="PRU00274"/>
    </source>
</evidence>
<reference key="1">
    <citation type="submission" date="2004-11" db="EMBL/GenBank/DDBJ databases">
        <authorList>
            <consortium name="The German cDNA consortium"/>
        </authorList>
    </citation>
    <scope>NUCLEOTIDE SEQUENCE [LARGE SCALE MRNA]</scope>
    <source>
        <tissue>Kidney</tissue>
    </source>
</reference>
<keyword id="KW-1015">Disulfide bond</keyword>
<keyword id="KW-0325">Glycoprotein</keyword>
<keyword id="KW-0378">Hydrolase</keyword>
<keyword id="KW-0472">Membrane</keyword>
<keyword id="KW-0645">Protease</keyword>
<keyword id="KW-1185">Reference proteome</keyword>
<keyword id="KW-0720">Serine protease</keyword>
<keyword id="KW-0735">Signal-anchor</keyword>
<keyword id="KW-0812">Transmembrane</keyword>
<keyword id="KW-1133">Transmembrane helix</keyword>
<name>HEPS_PONAB</name>
<gene>
    <name type="primary">HPN</name>
    <name type="synonym">TMPRSS1</name>
</gene>
<accession>Q5R5E8</accession>
<dbReference type="EC" id="3.4.21.106"/>
<dbReference type="EMBL" id="CR860913">
    <property type="protein sequence ID" value="CAH93018.1"/>
    <property type="molecule type" value="mRNA"/>
</dbReference>
<dbReference type="RefSeq" id="NP_001126784.1">
    <property type="nucleotide sequence ID" value="NM_001133312.1"/>
</dbReference>
<dbReference type="SMR" id="Q5R5E8"/>
<dbReference type="FunCoup" id="Q5R5E8">
    <property type="interactions" value="20"/>
</dbReference>
<dbReference type="STRING" id="9601.ENSPPYP00000011026"/>
<dbReference type="MEROPS" id="S01.224"/>
<dbReference type="GlyCosmos" id="Q5R5E8">
    <property type="glycosylation" value="1 site, No reported glycans"/>
</dbReference>
<dbReference type="GeneID" id="100173788"/>
<dbReference type="KEGG" id="pon:100173788"/>
<dbReference type="CTD" id="3249"/>
<dbReference type="eggNOG" id="KOG3627">
    <property type="taxonomic scope" value="Eukaryota"/>
</dbReference>
<dbReference type="InParanoid" id="Q5R5E8"/>
<dbReference type="OrthoDB" id="5979691at2759"/>
<dbReference type="Proteomes" id="UP000001595">
    <property type="component" value="Unplaced"/>
</dbReference>
<dbReference type="GO" id="GO:0009986">
    <property type="term" value="C:cell surface"/>
    <property type="evidence" value="ECO:0000250"/>
    <property type="project" value="UniProtKB"/>
</dbReference>
<dbReference type="GO" id="GO:0005911">
    <property type="term" value="C:cell-cell junction"/>
    <property type="evidence" value="ECO:0000250"/>
    <property type="project" value="UniProtKB"/>
</dbReference>
<dbReference type="GO" id="GO:0005737">
    <property type="term" value="C:cytoplasm"/>
    <property type="evidence" value="ECO:0000250"/>
    <property type="project" value="UniProtKB"/>
</dbReference>
<dbReference type="GO" id="GO:0005789">
    <property type="term" value="C:endoplasmic reticulum membrane"/>
    <property type="evidence" value="ECO:0000250"/>
    <property type="project" value="UniProtKB"/>
</dbReference>
<dbReference type="GO" id="GO:0043025">
    <property type="term" value="C:neuronal cell body"/>
    <property type="evidence" value="ECO:0000250"/>
    <property type="project" value="UniProtKB"/>
</dbReference>
<dbReference type="GO" id="GO:0005886">
    <property type="term" value="C:plasma membrane"/>
    <property type="evidence" value="ECO:0000250"/>
    <property type="project" value="UniProtKB"/>
</dbReference>
<dbReference type="GO" id="GO:0004252">
    <property type="term" value="F:serine-type endopeptidase activity"/>
    <property type="evidence" value="ECO:0007669"/>
    <property type="project" value="InterPro"/>
</dbReference>
<dbReference type="GO" id="GO:0070008">
    <property type="term" value="F:serine-type exopeptidase activity"/>
    <property type="evidence" value="ECO:0007669"/>
    <property type="project" value="InterPro"/>
</dbReference>
<dbReference type="GO" id="GO:0008236">
    <property type="term" value="F:serine-type peptidase activity"/>
    <property type="evidence" value="ECO:0000250"/>
    <property type="project" value="UniProtKB"/>
</dbReference>
<dbReference type="GO" id="GO:0034769">
    <property type="term" value="P:basement membrane disassembly"/>
    <property type="evidence" value="ECO:0000250"/>
    <property type="project" value="UniProtKB"/>
</dbReference>
<dbReference type="GO" id="GO:0090103">
    <property type="term" value="P:cochlea morphogenesis"/>
    <property type="evidence" value="ECO:0000250"/>
    <property type="project" value="UniProtKB"/>
</dbReference>
<dbReference type="GO" id="GO:0050910">
    <property type="term" value="P:detection of mechanical stimulus involved in sensory perception of sound"/>
    <property type="evidence" value="ECO:0000250"/>
    <property type="project" value="UniProtKB"/>
</dbReference>
<dbReference type="GO" id="GO:0043066">
    <property type="term" value="P:negative regulation of apoptotic process"/>
    <property type="evidence" value="ECO:0000250"/>
    <property type="project" value="UniProtKB"/>
</dbReference>
<dbReference type="GO" id="GO:0050680">
    <property type="term" value="P:negative regulation of epithelial cell proliferation"/>
    <property type="evidence" value="ECO:0000250"/>
    <property type="project" value="UniProtKB"/>
</dbReference>
<dbReference type="GO" id="GO:0010719">
    <property type="term" value="P:negative regulation of epithelial to mesenchymal transition"/>
    <property type="evidence" value="ECO:0000250"/>
    <property type="project" value="UniProtKB"/>
</dbReference>
<dbReference type="GO" id="GO:0097195">
    <property type="term" value="P:pilomotor reflex"/>
    <property type="evidence" value="ECO:0000250"/>
    <property type="project" value="UniProtKB"/>
</dbReference>
<dbReference type="GO" id="GO:0043923">
    <property type="term" value="P:positive regulation by host of viral transcription"/>
    <property type="evidence" value="ECO:0000250"/>
    <property type="project" value="UniProtKB"/>
</dbReference>
<dbReference type="GO" id="GO:0030307">
    <property type="term" value="P:positive regulation of cell growth"/>
    <property type="evidence" value="ECO:0000250"/>
    <property type="project" value="UniProtKB"/>
</dbReference>
<dbReference type="GO" id="GO:0010628">
    <property type="term" value="P:positive regulation of gene expression"/>
    <property type="evidence" value="ECO:0000250"/>
    <property type="project" value="UniProtKB"/>
</dbReference>
<dbReference type="GO" id="GO:2000347">
    <property type="term" value="P:positive regulation of hepatocyte proliferation"/>
    <property type="evidence" value="ECO:0000250"/>
    <property type="project" value="UniProtKB"/>
</dbReference>
<dbReference type="GO" id="GO:0010756">
    <property type="term" value="P:positive regulation of plasminogen activation"/>
    <property type="evidence" value="ECO:0000250"/>
    <property type="project" value="UniProtKB"/>
</dbReference>
<dbReference type="GO" id="GO:2000611">
    <property type="term" value="P:positive regulation of thyroid hormone generation"/>
    <property type="evidence" value="ECO:0000250"/>
    <property type="project" value="UniProtKB"/>
</dbReference>
<dbReference type="GO" id="GO:0071805">
    <property type="term" value="P:potassium ion transmembrane transport"/>
    <property type="evidence" value="ECO:0000250"/>
    <property type="project" value="UniProtKB"/>
</dbReference>
<dbReference type="GO" id="GO:0006508">
    <property type="term" value="P:proteolysis"/>
    <property type="evidence" value="ECO:0000250"/>
    <property type="project" value="UniProtKB"/>
</dbReference>
<dbReference type="GO" id="GO:0008360">
    <property type="term" value="P:regulation of cell shape"/>
    <property type="evidence" value="ECO:0000250"/>
    <property type="project" value="UniProtKB"/>
</dbReference>
<dbReference type="GO" id="GO:0097066">
    <property type="term" value="P:response to thyroid hormone"/>
    <property type="evidence" value="ECO:0000250"/>
    <property type="project" value="UniProtKB"/>
</dbReference>
<dbReference type="CDD" id="cd00190">
    <property type="entry name" value="Tryp_SPc"/>
    <property type="match status" value="1"/>
</dbReference>
<dbReference type="FunFam" id="2.40.10.10:FF:000118">
    <property type="entry name" value="Chymotrypsinogen A"/>
    <property type="match status" value="1"/>
</dbReference>
<dbReference type="FunFam" id="2.40.10.10:FF:000109">
    <property type="entry name" value="Hepsin"/>
    <property type="match status" value="1"/>
</dbReference>
<dbReference type="FunFam" id="3.10.250.10:FF:000020">
    <property type="entry name" value="serine protease hepsin"/>
    <property type="match status" value="1"/>
</dbReference>
<dbReference type="Gene3D" id="3.10.250.10">
    <property type="entry name" value="SRCR-like domain"/>
    <property type="match status" value="1"/>
</dbReference>
<dbReference type="Gene3D" id="2.40.10.10">
    <property type="entry name" value="Trypsin-like serine proteases"/>
    <property type="match status" value="1"/>
</dbReference>
<dbReference type="InterPro" id="IPR015352">
    <property type="entry name" value="Hepsin-SRCR_dom"/>
</dbReference>
<dbReference type="InterPro" id="IPR009003">
    <property type="entry name" value="Peptidase_S1_PA"/>
</dbReference>
<dbReference type="InterPro" id="IPR043504">
    <property type="entry name" value="Peptidase_S1_PA_chymotrypsin"/>
</dbReference>
<dbReference type="InterPro" id="IPR001314">
    <property type="entry name" value="Peptidase_S1A"/>
</dbReference>
<dbReference type="InterPro" id="IPR036772">
    <property type="entry name" value="SRCR-like_dom_sf"/>
</dbReference>
<dbReference type="InterPro" id="IPR001254">
    <property type="entry name" value="Trypsin_dom"/>
</dbReference>
<dbReference type="InterPro" id="IPR018114">
    <property type="entry name" value="TRYPSIN_HIS"/>
</dbReference>
<dbReference type="InterPro" id="IPR033116">
    <property type="entry name" value="TRYPSIN_SER"/>
</dbReference>
<dbReference type="PANTHER" id="PTHR24252">
    <property type="entry name" value="ACROSIN-RELATED"/>
    <property type="match status" value="1"/>
</dbReference>
<dbReference type="PANTHER" id="PTHR24252:SF7">
    <property type="entry name" value="HYALIN"/>
    <property type="match status" value="1"/>
</dbReference>
<dbReference type="Pfam" id="PF09272">
    <property type="entry name" value="Hepsin-SRCR"/>
    <property type="match status" value="1"/>
</dbReference>
<dbReference type="Pfam" id="PF00089">
    <property type="entry name" value="Trypsin"/>
    <property type="match status" value="1"/>
</dbReference>
<dbReference type="PRINTS" id="PR00722">
    <property type="entry name" value="CHYMOTRYPSIN"/>
</dbReference>
<dbReference type="SMART" id="SM00020">
    <property type="entry name" value="Tryp_SPc"/>
    <property type="match status" value="1"/>
</dbReference>
<dbReference type="SUPFAM" id="SSF56487">
    <property type="entry name" value="SRCR-like"/>
    <property type="match status" value="1"/>
</dbReference>
<dbReference type="SUPFAM" id="SSF50494">
    <property type="entry name" value="Trypsin-like serine proteases"/>
    <property type="match status" value="1"/>
</dbReference>
<dbReference type="PROSITE" id="PS50240">
    <property type="entry name" value="TRYPSIN_DOM"/>
    <property type="match status" value="1"/>
</dbReference>
<dbReference type="PROSITE" id="PS00134">
    <property type="entry name" value="TRYPSIN_HIS"/>
    <property type="match status" value="1"/>
</dbReference>
<dbReference type="PROSITE" id="PS00135">
    <property type="entry name" value="TRYPSIN_SER"/>
    <property type="match status" value="1"/>
</dbReference>
<organism>
    <name type="scientific">Pongo abelii</name>
    <name type="common">Sumatran orangutan</name>
    <name type="synonym">Pongo pygmaeus abelii</name>
    <dbReference type="NCBI Taxonomy" id="9601"/>
    <lineage>
        <taxon>Eukaryota</taxon>
        <taxon>Metazoa</taxon>
        <taxon>Chordata</taxon>
        <taxon>Craniata</taxon>
        <taxon>Vertebrata</taxon>
        <taxon>Euteleostomi</taxon>
        <taxon>Mammalia</taxon>
        <taxon>Eutheria</taxon>
        <taxon>Euarchontoglires</taxon>
        <taxon>Primates</taxon>
        <taxon>Haplorrhini</taxon>
        <taxon>Catarrhini</taxon>
        <taxon>Hominidae</taxon>
        <taxon>Pongo</taxon>
    </lineage>
</organism>
<feature type="chain" id="PRO_0000285878" description="Serine protease hepsin non-catalytic chain" evidence="2">
    <location>
        <begin position="1"/>
        <end position="162"/>
    </location>
</feature>
<feature type="chain" id="PRO_0000285879" description="Serine protease hepsin catalytic chain" evidence="2">
    <location>
        <begin position="163"/>
        <end position="417"/>
    </location>
</feature>
<feature type="topological domain" description="Cytoplasmic" evidence="2">
    <location>
        <begin position="1"/>
        <end position="23"/>
    </location>
</feature>
<feature type="transmembrane region" description="Helical; Signal-anchor for type II membrane protein" evidence="2">
    <location>
        <begin position="24"/>
        <end position="44"/>
    </location>
</feature>
<feature type="topological domain" description="Extracellular" evidence="2">
    <location>
        <begin position="45"/>
        <end position="417"/>
    </location>
</feature>
<feature type="domain" description="SRCR">
    <location>
        <begin position="54"/>
        <end position="151"/>
    </location>
</feature>
<feature type="domain" description="Peptidase S1" evidence="3">
    <location>
        <begin position="163"/>
        <end position="405"/>
    </location>
</feature>
<feature type="active site" description="Charge relay system" evidence="1">
    <location>
        <position position="203"/>
    </location>
</feature>
<feature type="active site" description="Charge relay system" evidence="1">
    <location>
        <position position="257"/>
    </location>
</feature>
<feature type="active site" description="Charge relay system" evidence="1">
    <location>
        <position position="353"/>
    </location>
</feature>
<feature type="glycosylation site" description="N-linked (GlcNAc...) asparagine" evidence="2">
    <location>
        <position position="112"/>
    </location>
</feature>
<feature type="disulfide bond" evidence="3">
    <location>
        <begin position="77"/>
        <end position="140"/>
    </location>
</feature>
<feature type="disulfide bond" evidence="3">
    <location>
        <begin position="90"/>
        <end position="150"/>
    </location>
</feature>
<feature type="disulfide bond" evidence="3">
    <location>
        <begin position="119"/>
        <end position="138"/>
    </location>
</feature>
<feature type="disulfide bond" description="Interchain (between non-catalytic and catalytic chains)" evidence="3">
    <location>
        <begin position="153"/>
        <end position="277"/>
    </location>
</feature>
<feature type="disulfide bond" evidence="3">
    <location>
        <begin position="188"/>
        <end position="204"/>
    </location>
</feature>
<feature type="disulfide bond" evidence="3">
    <location>
        <begin position="291"/>
        <end position="359"/>
    </location>
</feature>
<feature type="disulfide bond" evidence="3">
    <location>
        <begin position="322"/>
        <end position="338"/>
    </location>
</feature>
<feature type="disulfide bond" evidence="3">
    <location>
        <begin position="349"/>
        <end position="381"/>
    </location>
</feature>
<sequence length="417" mass="45025">MAQKEGGRTVPCCSRPKVAALTAGTLLLLTAIGAASWAIVAVLLRSDQEPLYPVQVSSADARLMVFDKTEGTWRLLCSSRSNARVAGLSCVEMGFLRALTHSELDVRTAGANGTSGFFCVDEGRLPHTQRLLEVISVCDCPRGRFLATICQDCGRRKLPVDRIVGGRDTSLGRWPWQVSLRYDGAHLCGGSLLSGDWVLTAAHCFPERNRVLSRWRVFAGAVAQASPHGLQLAVQAVVYHGGYLPFRDPNSEENSNDIALVHLSSPLPLTEYIQPVCLPAAGQALVDGKICTVTGWGNTQYYGQQAGVLQEARVPIISNDVCNGADFYGNQIKPKMFCAGYPEGGIDACQGDSGGPFVCEDSISRTPRWRLCGIVSWGTGCALAQKPGVYTKVSDFREWIFQAIKTHSEASGMVTQL</sequence>
<proteinExistence type="evidence at transcript level"/>